<comment type="function">
    <text evidence="1">Catalyzes the conversion of hemimercaptal, formed from methylglyoxal and glutathione, to S-lactoylglutathione.</text>
</comment>
<comment type="catalytic activity">
    <reaction>
        <text>(R)-S-lactoylglutathione = methylglyoxal + glutathione</text>
        <dbReference type="Rhea" id="RHEA:19069"/>
        <dbReference type="ChEBI" id="CHEBI:17158"/>
        <dbReference type="ChEBI" id="CHEBI:57474"/>
        <dbReference type="ChEBI" id="CHEBI:57925"/>
        <dbReference type="EC" id="4.4.1.5"/>
    </reaction>
</comment>
<comment type="cofactor">
    <cofactor evidence="1">
        <name>Zn(2+)</name>
        <dbReference type="ChEBI" id="CHEBI:29105"/>
    </cofactor>
    <text evidence="1">Binds 1 zinc ion per subunit.</text>
</comment>
<comment type="pathway">
    <text>Secondary metabolite metabolism; methylglyoxal degradation; (R)-lactate from methylglyoxal: step 1/2.</text>
</comment>
<comment type="similarity">
    <text evidence="4">Belongs to the glyoxalase I family.</text>
</comment>
<feature type="initiator methionine" description="Removed" evidence="2">
    <location>
        <position position="1"/>
    </location>
</feature>
<feature type="chain" id="PRO_0000168081" description="Putative lactoylglutathione lyase">
    <location>
        <begin position="2"/>
        <end position="282"/>
    </location>
</feature>
<feature type="domain" description="VOC 1" evidence="3">
    <location>
        <begin position="17"/>
        <end position="141"/>
    </location>
</feature>
<feature type="domain" description="VOC 2" evidence="3">
    <location>
        <begin position="147"/>
        <end position="274"/>
    </location>
</feature>
<feature type="active site" description="Proton donor/acceptor" evidence="1">
    <location>
        <position position="137"/>
    </location>
</feature>
<feature type="binding site" evidence="1">
    <location>
        <position position="20"/>
    </location>
    <ligand>
        <name>Zn(2+)</name>
        <dbReference type="ChEBI" id="CHEBI:29105"/>
    </ligand>
</feature>
<feature type="binding site" evidence="1">
    <location>
        <position position="24"/>
    </location>
    <ligand>
        <name>substrate</name>
    </ligand>
</feature>
<feature type="binding site" evidence="1">
    <location>
        <position position="71"/>
    </location>
    <ligand>
        <name>Zn(2+)</name>
        <dbReference type="ChEBI" id="CHEBI:29105"/>
    </ligand>
</feature>
<feature type="binding site" evidence="1">
    <location>
        <position position="75"/>
    </location>
    <ligand>
        <name>substrate</name>
    </ligand>
</feature>
<feature type="binding site" evidence="1">
    <location>
        <position position="89"/>
    </location>
    <ligand>
        <name>substrate</name>
    </ligand>
</feature>
<feature type="binding site" evidence="1">
    <location>
        <position position="89"/>
    </location>
    <ligand>
        <name>Zn(2+)</name>
        <dbReference type="ChEBI" id="CHEBI:29105"/>
    </ligand>
</feature>
<feature type="binding site" evidence="1">
    <location>
        <position position="137"/>
    </location>
    <ligand>
        <name>Zn(2+)</name>
        <dbReference type="ChEBI" id="CHEBI:29105"/>
    </ligand>
</feature>
<feature type="binding site" evidence="1">
    <location>
        <begin position="254"/>
        <end position="255"/>
    </location>
    <ligand>
        <name>substrate</name>
    </ligand>
</feature>
<feature type="modified residue" description="N-acetylalanine" evidence="2">
    <location>
        <position position="2"/>
    </location>
</feature>
<feature type="sequence variant">
    <original>M</original>
    <variation>L</variation>
    <location>
        <position position="41"/>
    </location>
</feature>
<feature type="sequence variant">
    <original>V</original>
    <variation>I</variation>
    <location>
        <position position="162"/>
    </location>
</feature>
<feature type="sequence variant">
    <original>M</original>
    <variation>Y</variation>
    <location>
        <position position="165"/>
    </location>
</feature>
<feature type="sequence variant">
    <original>N</original>
    <variation>KY</variation>
    <location>
        <position position="183"/>
    </location>
</feature>
<feature type="sequence variant">
    <original>V</original>
    <variation>A</variation>
    <location>
        <position position="236"/>
    </location>
</feature>
<feature type="sequence variant">
    <original>Q</original>
    <variation>T</variation>
    <location>
        <position position="269"/>
    </location>
</feature>
<protein>
    <recommendedName>
        <fullName>Putative lactoylglutathione lyase</fullName>
        <ecNumber>4.4.1.5</ecNumber>
    </recommendedName>
    <alternativeName>
        <fullName>Aldoketomutase</fullName>
    </alternativeName>
    <alternativeName>
        <fullName>Glyoxalase I</fullName>
        <shortName>Glx I</shortName>
    </alternativeName>
    <alternativeName>
        <fullName>Ketone-aldehyde mutase</fullName>
    </alternativeName>
    <alternativeName>
        <fullName>Methylglyoxalase</fullName>
    </alternativeName>
    <alternativeName>
        <fullName>S-D-lactoylglutathione methylglyoxal lyase</fullName>
    </alternativeName>
</protein>
<reference key="1">
    <citation type="thesis" date="1996" institute="University of Durham" country="United Kingdom">
        <authorList>
            <person name="Booker J.P."/>
        </authorList>
    </citation>
    <scope>NUCLEOTIDE SEQUENCE [GENOMIC DNA / MRNA]</scope>
</reference>
<organism>
    <name type="scientific">Brassica oleracea var. gemmifera</name>
    <name type="common">Brussel sprouts</name>
    <dbReference type="NCBI Taxonomy" id="178616"/>
    <lineage>
        <taxon>Eukaryota</taxon>
        <taxon>Viridiplantae</taxon>
        <taxon>Streptophyta</taxon>
        <taxon>Embryophyta</taxon>
        <taxon>Tracheophyta</taxon>
        <taxon>Spermatophyta</taxon>
        <taxon>Magnoliopsida</taxon>
        <taxon>eudicotyledons</taxon>
        <taxon>Gunneridae</taxon>
        <taxon>Pentapetalae</taxon>
        <taxon>rosids</taxon>
        <taxon>malvids</taxon>
        <taxon>Brassicales</taxon>
        <taxon>Brassicaceae</taxon>
        <taxon>Brassiceae</taxon>
        <taxon>Brassica</taxon>
    </lineage>
</organism>
<sequence length="282" mass="31646">MAENADLVEWPKKDKRRFLHVVYRVGDLDRTIQFYTECFGMKVLRKRDVPEEKYSNAFLGFGPETSNFVVELTYNYGVSSYDIGTGFGHFAISTQDVSKMVEAVRAKGGNVTREPGPVKGGGSVIAFVKDPDGYTFELIQRGPTPEPLCQVMLRVGDLDRAVKFMEKALGMRLLRRIERPEYNTIGMMGYAEEYESIVLELTYNYGVTEYTKGNAYAQIAIGTDDVYKSAEVVKIVNQELGGKITREAGPLPGLGTKIVSFLDPDGWKQVLVDNEDFLKELE</sequence>
<accession>Q39366</accession>
<accession>Q39365</accession>
<dbReference type="EC" id="4.4.1.5"/>
<dbReference type="EMBL" id="Z74962">
    <property type="protein sequence ID" value="CAA99248.1"/>
    <property type="molecule type" value="Genomic_DNA"/>
</dbReference>
<dbReference type="EMBL" id="Z74950">
    <property type="protein sequence ID" value="CAA99233.1"/>
    <property type="molecule type" value="mRNA"/>
</dbReference>
<dbReference type="PIR" id="T14440">
    <property type="entry name" value="T14440"/>
</dbReference>
<dbReference type="SMR" id="Q39366"/>
<dbReference type="UniPathway" id="UPA00619">
    <property type="reaction ID" value="UER00675"/>
</dbReference>
<dbReference type="GO" id="GO:0005737">
    <property type="term" value="C:cytoplasm"/>
    <property type="evidence" value="ECO:0007669"/>
    <property type="project" value="TreeGrafter"/>
</dbReference>
<dbReference type="GO" id="GO:0004462">
    <property type="term" value="F:lactoylglutathione lyase activity"/>
    <property type="evidence" value="ECO:0007669"/>
    <property type="project" value="UniProtKB-EC"/>
</dbReference>
<dbReference type="GO" id="GO:0046872">
    <property type="term" value="F:metal ion binding"/>
    <property type="evidence" value="ECO:0007669"/>
    <property type="project" value="UniProtKB-KW"/>
</dbReference>
<dbReference type="GO" id="GO:0019243">
    <property type="term" value="P:methylglyoxal catabolic process to D-lactate via S-lactoyl-glutathione"/>
    <property type="evidence" value="ECO:0007669"/>
    <property type="project" value="TreeGrafter"/>
</dbReference>
<dbReference type="CDD" id="cd16358">
    <property type="entry name" value="GlxI_Ni"/>
    <property type="match status" value="1"/>
</dbReference>
<dbReference type="FunFam" id="3.10.180.10:FF:000004">
    <property type="entry name" value="Lactoylglutathione lyase"/>
    <property type="match status" value="1"/>
</dbReference>
<dbReference type="Gene3D" id="3.10.180.10">
    <property type="entry name" value="2,3-Dihydroxybiphenyl 1,2-Dioxygenase, domain 1"/>
    <property type="match status" value="2"/>
</dbReference>
<dbReference type="InterPro" id="IPR029068">
    <property type="entry name" value="Glyas_Bleomycin-R_OHBP_Dase"/>
</dbReference>
<dbReference type="InterPro" id="IPR004360">
    <property type="entry name" value="Glyas_Fos-R_dOase_dom"/>
</dbReference>
<dbReference type="InterPro" id="IPR004361">
    <property type="entry name" value="Glyoxalase_1"/>
</dbReference>
<dbReference type="InterPro" id="IPR018146">
    <property type="entry name" value="Glyoxalase_1_CS"/>
</dbReference>
<dbReference type="InterPro" id="IPR037523">
    <property type="entry name" value="VOC"/>
</dbReference>
<dbReference type="NCBIfam" id="TIGR00068">
    <property type="entry name" value="glyox_I"/>
    <property type="match status" value="1"/>
</dbReference>
<dbReference type="PANTHER" id="PTHR46036">
    <property type="entry name" value="LACTOYLGLUTATHIONE LYASE"/>
    <property type="match status" value="1"/>
</dbReference>
<dbReference type="PANTHER" id="PTHR46036:SF2">
    <property type="entry name" value="LACTOYLGLUTATHIONE LYASE GLX1"/>
    <property type="match status" value="1"/>
</dbReference>
<dbReference type="Pfam" id="PF00903">
    <property type="entry name" value="Glyoxalase"/>
    <property type="match status" value="2"/>
</dbReference>
<dbReference type="SUPFAM" id="SSF54593">
    <property type="entry name" value="Glyoxalase/Bleomycin resistance protein/Dihydroxybiphenyl dioxygenase"/>
    <property type="match status" value="2"/>
</dbReference>
<dbReference type="PROSITE" id="PS00934">
    <property type="entry name" value="GLYOXALASE_I_1"/>
    <property type="match status" value="2"/>
</dbReference>
<dbReference type="PROSITE" id="PS00935">
    <property type="entry name" value="GLYOXALASE_I_2"/>
    <property type="match status" value="1"/>
</dbReference>
<dbReference type="PROSITE" id="PS51819">
    <property type="entry name" value="VOC"/>
    <property type="match status" value="2"/>
</dbReference>
<name>LGUL_BRAOG</name>
<proteinExistence type="evidence at transcript level"/>
<keyword id="KW-0007">Acetylation</keyword>
<keyword id="KW-0456">Lyase</keyword>
<keyword id="KW-0479">Metal-binding</keyword>
<keyword id="KW-0677">Repeat</keyword>
<keyword id="KW-0862">Zinc</keyword>
<evidence type="ECO:0000250" key="1"/>
<evidence type="ECO:0000250" key="2">
    <source>
        <dbReference type="UniProtKB" id="O65398"/>
    </source>
</evidence>
<evidence type="ECO:0000255" key="3">
    <source>
        <dbReference type="PROSITE-ProRule" id="PRU01163"/>
    </source>
</evidence>
<evidence type="ECO:0000305" key="4"/>